<evidence type="ECO:0000255" key="1">
    <source>
        <dbReference type="HAMAP-Rule" id="MF_00366"/>
    </source>
</evidence>
<gene>
    <name evidence="1" type="primary">rpoZ</name>
    <name type="ordered locus">Bpet2247</name>
</gene>
<name>RPOZ_BORPD</name>
<keyword id="KW-0240">DNA-directed RNA polymerase</keyword>
<keyword id="KW-0548">Nucleotidyltransferase</keyword>
<keyword id="KW-0804">Transcription</keyword>
<keyword id="KW-0808">Transferase</keyword>
<accession>A9ILJ1</accession>
<proteinExistence type="inferred from homology"/>
<sequence>MARITVEDCLNQVPNRFKLTLAATYRARELAQGHAPRIDSKDKPTVTALREIAGGHTGLEMLRKVPT</sequence>
<protein>
    <recommendedName>
        <fullName evidence="1">DNA-directed RNA polymerase subunit omega</fullName>
        <shortName evidence="1">RNAP omega subunit</shortName>
        <ecNumber evidence="1">2.7.7.6</ecNumber>
    </recommendedName>
    <alternativeName>
        <fullName evidence="1">RNA polymerase omega subunit</fullName>
    </alternativeName>
    <alternativeName>
        <fullName evidence="1">Transcriptase subunit omega</fullName>
    </alternativeName>
</protein>
<reference key="1">
    <citation type="journal article" date="2008" name="BMC Genomics">
        <title>The missing link: Bordetella petrii is endowed with both the metabolic versatility of environmental bacteria and virulence traits of pathogenic Bordetellae.</title>
        <authorList>
            <person name="Gross R."/>
            <person name="Guzman C.A."/>
            <person name="Sebaihia M."/>
            <person name="Martin dos Santos V.A.P."/>
            <person name="Pieper D.H."/>
            <person name="Koebnik R."/>
            <person name="Lechner M."/>
            <person name="Bartels D."/>
            <person name="Buhrmester J."/>
            <person name="Choudhuri J.V."/>
            <person name="Ebensen T."/>
            <person name="Gaigalat L."/>
            <person name="Herrmann S."/>
            <person name="Khachane A.N."/>
            <person name="Larisch C."/>
            <person name="Link S."/>
            <person name="Linke B."/>
            <person name="Meyer F."/>
            <person name="Mormann S."/>
            <person name="Nakunst D."/>
            <person name="Rueckert C."/>
            <person name="Schneiker-Bekel S."/>
            <person name="Schulze K."/>
            <person name="Voerholter F.-J."/>
            <person name="Yevsa T."/>
            <person name="Engle J.T."/>
            <person name="Goldman W.E."/>
            <person name="Puehler A."/>
            <person name="Goebel U.B."/>
            <person name="Goesmann A."/>
            <person name="Bloecker H."/>
            <person name="Kaiser O."/>
            <person name="Martinez-Arias R."/>
        </authorList>
    </citation>
    <scope>NUCLEOTIDE SEQUENCE [LARGE SCALE GENOMIC DNA]</scope>
    <source>
        <strain>ATCC BAA-461 / DSM 12804 / CCUG 43448</strain>
    </source>
</reference>
<comment type="function">
    <text evidence="1">Promotes RNA polymerase assembly. Latches the N- and C-terminal regions of the beta' subunit thereby facilitating its interaction with the beta and alpha subunits.</text>
</comment>
<comment type="catalytic activity">
    <reaction evidence="1">
        <text>RNA(n) + a ribonucleoside 5'-triphosphate = RNA(n+1) + diphosphate</text>
        <dbReference type="Rhea" id="RHEA:21248"/>
        <dbReference type="Rhea" id="RHEA-COMP:14527"/>
        <dbReference type="Rhea" id="RHEA-COMP:17342"/>
        <dbReference type="ChEBI" id="CHEBI:33019"/>
        <dbReference type="ChEBI" id="CHEBI:61557"/>
        <dbReference type="ChEBI" id="CHEBI:140395"/>
        <dbReference type="EC" id="2.7.7.6"/>
    </reaction>
</comment>
<comment type="subunit">
    <text evidence="1">The RNAP catalytic core consists of 2 alpha, 1 beta, 1 beta' and 1 omega subunit. When a sigma factor is associated with the core the holoenzyme is formed, which can initiate transcription.</text>
</comment>
<comment type="similarity">
    <text evidence="1">Belongs to the RNA polymerase subunit omega family.</text>
</comment>
<organism>
    <name type="scientific">Bordetella petrii (strain ATCC BAA-461 / DSM 12804 / CCUG 43448)</name>
    <dbReference type="NCBI Taxonomy" id="340100"/>
    <lineage>
        <taxon>Bacteria</taxon>
        <taxon>Pseudomonadati</taxon>
        <taxon>Pseudomonadota</taxon>
        <taxon>Betaproteobacteria</taxon>
        <taxon>Burkholderiales</taxon>
        <taxon>Alcaligenaceae</taxon>
        <taxon>Bordetella</taxon>
    </lineage>
</organism>
<dbReference type="EC" id="2.7.7.6" evidence="1"/>
<dbReference type="EMBL" id="AM902716">
    <property type="protein sequence ID" value="CAP42590.1"/>
    <property type="molecule type" value="Genomic_DNA"/>
</dbReference>
<dbReference type="SMR" id="A9ILJ1"/>
<dbReference type="STRING" id="94624.Bpet2247"/>
<dbReference type="KEGG" id="bpt:Bpet2247"/>
<dbReference type="eggNOG" id="COG1758">
    <property type="taxonomic scope" value="Bacteria"/>
</dbReference>
<dbReference type="Proteomes" id="UP000001225">
    <property type="component" value="Chromosome"/>
</dbReference>
<dbReference type="GO" id="GO:0000428">
    <property type="term" value="C:DNA-directed RNA polymerase complex"/>
    <property type="evidence" value="ECO:0007669"/>
    <property type="project" value="UniProtKB-KW"/>
</dbReference>
<dbReference type="GO" id="GO:0003677">
    <property type="term" value="F:DNA binding"/>
    <property type="evidence" value="ECO:0007669"/>
    <property type="project" value="UniProtKB-UniRule"/>
</dbReference>
<dbReference type="GO" id="GO:0003899">
    <property type="term" value="F:DNA-directed RNA polymerase activity"/>
    <property type="evidence" value="ECO:0007669"/>
    <property type="project" value="UniProtKB-UniRule"/>
</dbReference>
<dbReference type="GO" id="GO:0006351">
    <property type="term" value="P:DNA-templated transcription"/>
    <property type="evidence" value="ECO:0007669"/>
    <property type="project" value="UniProtKB-UniRule"/>
</dbReference>
<dbReference type="Gene3D" id="3.90.940.10">
    <property type="match status" value="1"/>
</dbReference>
<dbReference type="HAMAP" id="MF_00366">
    <property type="entry name" value="RNApol_bact_RpoZ"/>
    <property type="match status" value="1"/>
</dbReference>
<dbReference type="InterPro" id="IPR003716">
    <property type="entry name" value="DNA-dir_RNA_pol_omega"/>
</dbReference>
<dbReference type="InterPro" id="IPR006110">
    <property type="entry name" value="Pol_omega/Rpo6/RPB6"/>
</dbReference>
<dbReference type="InterPro" id="IPR036161">
    <property type="entry name" value="RPB6/omega-like_sf"/>
</dbReference>
<dbReference type="NCBIfam" id="TIGR00690">
    <property type="entry name" value="rpoZ"/>
    <property type="match status" value="1"/>
</dbReference>
<dbReference type="PANTHER" id="PTHR34476">
    <property type="entry name" value="DNA-DIRECTED RNA POLYMERASE SUBUNIT OMEGA"/>
    <property type="match status" value="1"/>
</dbReference>
<dbReference type="PANTHER" id="PTHR34476:SF1">
    <property type="entry name" value="DNA-DIRECTED RNA POLYMERASE SUBUNIT OMEGA"/>
    <property type="match status" value="1"/>
</dbReference>
<dbReference type="Pfam" id="PF01192">
    <property type="entry name" value="RNA_pol_Rpb6"/>
    <property type="match status" value="1"/>
</dbReference>
<dbReference type="SMART" id="SM01409">
    <property type="entry name" value="RNA_pol_Rpb6"/>
    <property type="match status" value="1"/>
</dbReference>
<dbReference type="SUPFAM" id="SSF63562">
    <property type="entry name" value="RPB6/omega subunit-like"/>
    <property type="match status" value="1"/>
</dbReference>
<feature type="chain" id="PRO_1000121193" description="DNA-directed RNA polymerase subunit omega">
    <location>
        <begin position="1"/>
        <end position="67"/>
    </location>
</feature>